<proteinExistence type="inferred from homology"/>
<dbReference type="EMBL" id="CP000319">
    <property type="protein sequence ID" value="ABE61755.1"/>
    <property type="molecule type" value="Genomic_DNA"/>
</dbReference>
<dbReference type="RefSeq" id="WP_011509454.1">
    <property type="nucleotide sequence ID" value="NC_007964.1"/>
</dbReference>
<dbReference type="SMR" id="Q1QPU2"/>
<dbReference type="STRING" id="323097.Nham_0892"/>
<dbReference type="KEGG" id="nha:Nham_0892"/>
<dbReference type="eggNOG" id="COG0355">
    <property type="taxonomic scope" value="Bacteria"/>
</dbReference>
<dbReference type="HOGENOM" id="CLU_084338_2_1_5"/>
<dbReference type="OrthoDB" id="9799969at2"/>
<dbReference type="Proteomes" id="UP000001953">
    <property type="component" value="Chromosome"/>
</dbReference>
<dbReference type="GO" id="GO:0005886">
    <property type="term" value="C:plasma membrane"/>
    <property type="evidence" value="ECO:0007669"/>
    <property type="project" value="UniProtKB-SubCell"/>
</dbReference>
<dbReference type="GO" id="GO:0045259">
    <property type="term" value="C:proton-transporting ATP synthase complex"/>
    <property type="evidence" value="ECO:0007669"/>
    <property type="project" value="UniProtKB-KW"/>
</dbReference>
<dbReference type="GO" id="GO:0005524">
    <property type="term" value="F:ATP binding"/>
    <property type="evidence" value="ECO:0007669"/>
    <property type="project" value="UniProtKB-UniRule"/>
</dbReference>
<dbReference type="GO" id="GO:0046933">
    <property type="term" value="F:proton-transporting ATP synthase activity, rotational mechanism"/>
    <property type="evidence" value="ECO:0007669"/>
    <property type="project" value="UniProtKB-UniRule"/>
</dbReference>
<dbReference type="CDD" id="cd12152">
    <property type="entry name" value="F1-ATPase_delta"/>
    <property type="match status" value="1"/>
</dbReference>
<dbReference type="Gene3D" id="2.60.15.10">
    <property type="entry name" value="F0F1 ATP synthase delta/epsilon subunit, N-terminal"/>
    <property type="match status" value="1"/>
</dbReference>
<dbReference type="HAMAP" id="MF_00530">
    <property type="entry name" value="ATP_synth_epsil_bac"/>
    <property type="match status" value="1"/>
</dbReference>
<dbReference type="InterPro" id="IPR001469">
    <property type="entry name" value="ATP_synth_F1_dsu/esu"/>
</dbReference>
<dbReference type="InterPro" id="IPR020546">
    <property type="entry name" value="ATP_synth_F1_dsu/esu_N"/>
</dbReference>
<dbReference type="InterPro" id="IPR036771">
    <property type="entry name" value="ATPsynth_dsu/esu_N"/>
</dbReference>
<dbReference type="NCBIfam" id="TIGR01216">
    <property type="entry name" value="ATP_synt_epsi"/>
    <property type="match status" value="1"/>
</dbReference>
<dbReference type="NCBIfam" id="NF009982">
    <property type="entry name" value="PRK13448.1"/>
    <property type="match status" value="1"/>
</dbReference>
<dbReference type="PANTHER" id="PTHR13822">
    <property type="entry name" value="ATP SYNTHASE DELTA/EPSILON CHAIN"/>
    <property type="match status" value="1"/>
</dbReference>
<dbReference type="PANTHER" id="PTHR13822:SF10">
    <property type="entry name" value="ATP SYNTHASE EPSILON CHAIN, CHLOROPLASTIC"/>
    <property type="match status" value="1"/>
</dbReference>
<dbReference type="Pfam" id="PF02823">
    <property type="entry name" value="ATP-synt_DE_N"/>
    <property type="match status" value="1"/>
</dbReference>
<dbReference type="SUPFAM" id="SSF51344">
    <property type="entry name" value="Epsilon subunit of F1F0-ATP synthase N-terminal domain"/>
    <property type="match status" value="1"/>
</dbReference>
<name>ATPE2_NITHX</name>
<sequence length="136" mass="14451">MTRFQVSLVSPESLLFSGQVDQVDLPGIEGDLGVLAGHAPIVVMLRPGIVTTVAGDIRDRFVILGGLAEFSQGELTILADSASSVDGFDLTRLKAQIDEMQESLAKQSVGDELDRAVAKFDHFKAIHTALAPATAF</sequence>
<gene>
    <name evidence="1" type="primary">atpC2</name>
    <name type="ordered locus">Nham_0892</name>
</gene>
<accession>Q1QPU2</accession>
<keyword id="KW-0066">ATP synthesis</keyword>
<keyword id="KW-0997">Cell inner membrane</keyword>
<keyword id="KW-1003">Cell membrane</keyword>
<keyword id="KW-0139">CF(1)</keyword>
<keyword id="KW-0375">Hydrogen ion transport</keyword>
<keyword id="KW-0406">Ion transport</keyword>
<keyword id="KW-0472">Membrane</keyword>
<keyword id="KW-1185">Reference proteome</keyword>
<keyword id="KW-0813">Transport</keyword>
<comment type="function">
    <text evidence="1">Produces ATP from ADP in the presence of a proton gradient across the membrane.</text>
</comment>
<comment type="subunit">
    <text>F-type ATPases have 2 components, CF(1) - the catalytic core - and CF(0) - the membrane proton channel. CF(1) has five subunits: alpha(3), beta(3), gamma(1), delta(1), epsilon(1). CF(0) has three main subunits: a, b and c.</text>
</comment>
<comment type="subcellular location">
    <subcellularLocation>
        <location evidence="1">Cell inner membrane</location>
        <topology evidence="1">Peripheral membrane protein</topology>
    </subcellularLocation>
</comment>
<comment type="similarity">
    <text evidence="1">Belongs to the ATPase epsilon chain family.</text>
</comment>
<protein>
    <recommendedName>
        <fullName evidence="1">ATP synthase epsilon chain 2</fullName>
    </recommendedName>
    <alternativeName>
        <fullName evidence="1">ATP synthase F1 sector epsilon subunit 2</fullName>
    </alternativeName>
    <alternativeName>
        <fullName evidence="1">F-ATPase epsilon subunit 2</fullName>
    </alternativeName>
</protein>
<evidence type="ECO:0000255" key="1">
    <source>
        <dbReference type="HAMAP-Rule" id="MF_00530"/>
    </source>
</evidence>
<organism>
    <name type="scientific">Nitrobacter hamburgensis (strain DSM 10229 / NCIMB 13809 / X14)</name>
    <dbReference type="NCBI Taxonomy" id="323097"/>
    <lineage>
        <taxon>Bacteria</taxon>
        <taxon>Pseudomonadati</taxon>
        <taxon>Pseudomonadota</taxon>
        <taxon>Alphaproteobacteria</taxon>
        <taxon>Hyphomicrobiales</taxon>
        <taxon>Nitrobacteraceae</taxon>
        <taxon>Nitrobacter</taxon>
    </lineage>
</organism>
<feature type="chain" id="PRO_0000265846" description="ATP synthase epsilon chain 2">
    <location>
        <begin position="1"/>
        <end position="136"/>
    </location>
</feature>
<reference key="1">
    <citation type="submission" date="2006-03" db="EMBL/GenBank/DDBJ databases">
        <title>Complete sequence of chromosome of Nitrobacter hamburgensis X14.</title>
        <authorList>
            <consortium name="US DOE Joint Genome Institute"/>
            <person name="Copeland A."/>
            <person name="Lucas S."/>
            <person name="Lapidus A."/>
            <person name="Barry K."/>
            <person name="Detter J.C."/>
            <person name="Glavina del Rio T."/>
            <person name="Hammon N."/>
            <person name="Israni S."/>
            <person name="Dalin E."/>
            <person name="Tice H."/>
            <person name="Pitluck S."/>
            <person name="Chain P."/>
            <person name="Malfatti S."/>
            <person name="Shin M."/>
            <person name="Vergez L."/>
            <person name="Schmutz J."/>
            <person name="Larimer F."/>
            <person name="Land M."/>
            <person name="Hauser L."/>
            <person name="Kyrpides N."/>
            <person name="Ivanova N."/>
            <person name="Ward B."/>
            <person name="Arp D."/>
            <person name="Klotz M."/>
            <person name="Stein L."/>
            <person name="O'Mullan G."/>
            <person name="Starkenburg S."/>
            <person name="Sayavedra L."/>
            <person name="Poret-Peterson A.T."/>
            <person name="Gentry M.E."/>
            <person name="Bruce D."/>
            <person name="Richardson P."/>
        </authorList>
    </citation>
    <scope>NUCLEOTIDE SEQUENCE [LARGE SCALE GENOMIC DNA]</scope>
    <source>
        <strain>DSM 10229 / NCIMB 13809 / X14</strain>
    </source>
</reference>